<accession>P77795</accession>
<dbReference type="EMBL" id="U00096">
    <property type="protein sequence ID" value="AAC74523.1"/>
    <property type="molecule type" value="Genomic_DNA"/>
</dbReference>
<dbReference type="EMBL" id="AP009048">
    <property type="protein sequence ID" value="BAA15070.1"/>
    <property type="molecule type" value="Genomic_DNA"/>
</dbReference>
<dbReference type="PIR" id="D64896">
    <property type="entry name" value="D64896"/>
</dbReference>
<dbReference type="RefSeq" id="NP_415958.1">
    <property type="nucleotide sequence ID" value="NC_000913.3"/>
</dbReference>
<dbReference type="RefSeq" id="WP_000220396.1">
    <property type="nucleotide sequence ID" value="NZ_STEB01000043.1"/>
</dbReference>
<dbReference type="SMR" id="P77795"/>
<dbReference type="BioGRID" id="4260189">
    <property type="interactions" value="84"/>
</dbReference>
<dbReference type="ComplexPortal" id="CPX-4446">
    <property type="entry name" value="YdcSTUV ABC transporter complex"/>
</dbReference>
<dbReference type="FunCoup" id="P77795">
    <property type="interactions" value="267"/>
</dbReference>
<dbReference type="STRING" id="511145.b1441"/>
<dbReference type="TCDB" id="3.A.1.11.9">
    <property type="family name" value="the atp-binding cassette (abc) superfamily"/>
</dbReference>
<dbReference type="jPOST" id="P77795"/>
<dbReference type="PaxDb" id="511145-b1441"/>
<dbReference type="EnsemblBacteria" id="AAC74523">
    <property type="protein sequence ID" value="AAC74523"/>
    <property type="gene ID" value="b1441"/>
</dbReference>
<dbReference type="GeneID" id="946007"/>
<dbReference type="KEGG" id="ecj:JW1436"/>
<dbReference type="KEGG" id="eco:b1441"/>
<dbReference type="KEGG" id="ecoc:C3026_08385"/>
<dbReference type="PATRIC" id="fig|1411691.4.peg.827"/>
<dbReference type="EchoBASE" id="EB3526"/>
<dbReference type="eggNOG" id="COG3842">
    <property type="taxonomic scope" value="Bacteria"/>
</dbReference>
<dbReference type="HOGENOM" id="CLU_000604_1_1_6"/>
<dbReference type="InParanoid" id="P77795"/>
<dbReference type="OMA" id="WPREAMT"/>
<dbReference type="OrthoDB" id="9802264at2"/>
<dbReference type="PhylomeDB" id="P77795"/>
<dbReference type="BioCyc" id="EcoCyc:YDCT-MONOMER"/>
<dbReference type="BioCyc" id="MetaCyc:YDCT-MONOMER"/>
<dbReference type="PRO" id="PR:P77795"/>
<dbReference type="Proteomes" id="UP000000625">
    <property type="component" value="Chromosome"/>
</dbReference>
<dbReference type="GO" id="GO:0055052">
    <property type="term" value="C:ATP-binding cassette (ABC) transporter complex, substrate-binding subunit-containing"/>
    <property type="evidence" value="ECO:0000303"/>
    <property type="project" value="ComplexPortal"/>
</dbReference>
<dbReference type="GO" id="GO:0016020">
    <property type="term" value="C:membrane"/>
    <property type="evidence" value="ECO:0000303"/>
    <property type="project" value="ComplexPortal"/>
</dbReference>
<dbReference type="GO" id="GO:0005524">
    <property type="term" value="F:ATP binding"/>
    <property type="evidence" value="ECO:0007669"/>
    <property type="project" value="UniProtKB-KW"/>
</dbReference>
<dbReference type="GO" id="GO:0016887">
    <property type="term" value="F:ATP hydrolysis activity"/>
    <property type="evidence" value="ECO:0007669"/>
    <property type="project" value="InterPro"/>
</dbReference>
<dbReference type="GO" id="GO:0022857">
    <property type="term" value="F:transmembrane transporter activity"/>
    <property type="evidence" value="ECO:0007669"/>
    <property type="project" value="InterPro"/>
</dbReference>
<dbReference type="GO" id="GO:0055085">
    <property type="term" value="P:transmembrane transport"/>
    <property type="evidence" value="ECO:0000303"/>
    <property type="project" value="ComplexPortal"/>
</dbReference>
<dbReference type="FunFam" id="3.40.50.300:FF:000133">
    <property type="entry name" value="Spermidine/putrescine import ATP-binding protein PotA"/>
    <property type="match status" value="1"/>
</dbReference>
<dbReference type="Gene3D" id="2.40.50.100">
    <property type="match status" value="1"/>
</dbReference>
<dbReference type="Gene3D" id="3.40.50.300">
    <property type="entry name" value="P-loop containing nucleotide triphosphate hydrolases"/>
    <property type="match status" value="1"/>
</dbReference>
<dbReference type="InterPro" id="IPR003593">
    <property type="entry name" value="AAA+_ATPase"/>
</dbReference>
<dbReference type="InterPro" id="IPR050093">
    <property type="entry name" value="ABC_SmlMolc_Importer"/>
</dbReference>
<dbReference type="InterPro" id="IPR003439">
    <property type="entry name" value="ABC_transporter-like_ATP-bd"/>
</dbReference>
<dbReference type="InterPro" id="IPR017871">
    <property type="entry name" value="ABC_transporter-like_CS"/>
</dbReference>
<dbReference type="InterPro" id="IPR008995">
    <property type="entry name" value="Mo/tungstate-bd_C_term_dom"/>
</dbReference>
<dbReference type="InterPro" id="IPR027417">
    <property type="entry name" value="P-loop_NTPase"/>
</dbReference>
<dbReference type="InterPro" id="IPR013611">
    <property type="entry name" value="Transp-assoc_OB_typ2"/>
</dbReference>
<dbReference type="PANTHER" id="PTHR42781">
    <property type="entry name" value="SPERMIDINE/PUTRESCINE IMPORT ATP-BINDING PROTEIN POTA"/>
    <property type="match status" value="1"/>
</dbReference>
<dbReference type="PANTHER" id="PTHR42781:SF4">
    <property type="entry name" value="SPERMIDINE_PUTRESCINE IMPORT ATP-BINDING PROTEIN POTA"/>
    <property type="match status" value="1"/>
</dbReference>
<dbReference type="Pfam" id="PF00005">
    <property type="entry name" value="ABC_tran"/>
    <property type="match status" value="1"/>
</dbReference>
<dbReference type="Pfam" id="PF08402">
    <property type="entry name" value="TOBE_2"/>
    <property type="match status" value="1"/>
</dbReference>
<dbReference type="SMART" id="SM00382">
    <property type="entry name" value="AAA"/>
    <property type="match status" value="1"/>
</dbReference>
<dbReference type="SUPFAM" id="SSF50331">
    <property type="entry name" value="MOP-like"/>
    <property type="match status" value="1"/>
</dbReference>
<dbReference type="SUPFAM" id="SSF52540">
    <property type="entry name" value="P-loop containing nucleoside triphosphate hydrolases"/>
    <property type="match status" value="1"/>
</dbReference>
<dbReference type="PROSITE" id="PS00211">
    <property type="entry name" value="ABC_TRANSPORTER_1"/>
    <property type="match status" value="1"/>
</dbReference>
<dbReference type="PROSITE" id="PS50893">
    <property type="entry name" value="ABC_TRANSPORTER_2"/>
    <property type="match status" value="1"/>
</dbReference>
<sequence length="337" mass="37041">MTYAVEFDNVSRLYGDVRAVDGVSIAIKDGEFFSMLGPSGSGKTTCLRLIAGFEQLSGGAISIFGKPASNLPPWERDVNTVFQDYALFPHMSILDNVAYGLMVKGVNKKQRHAMAQEALEKVALGFVHQRKPSQLSGGQRQRVAIARALVNEPRVLLLDEPLGALDLKLREQMQLELKKLQQSLGITFIFVTHDQGEALSMSDRVAVFNNGRIEQVDSPRDLYMRPRTPFVAGFVGTSNVFDGLMAEKLCGMTGSFALRPEHIRLNTPGELQANGTIQAVQYQGAATRFELKLNGGEKLLVSQANMTGEELPATLTPGQQVMVSWSRDVMVPLVEER</sequence>
<organism>
    <name type="scientific">Escherichia coli (strain K12)</name>
    <dbReference type="NCBI Taxonomy" id="83333"/>
    <lineage>
        <taxon>Bacteria</taxon>
        <taxon>Pseudomonadati</taxon>
        <taxon>Pseudomonadota</taxon>
        <taxon>Gammaproteobacteria</taxon>
        <taxon>Enterobacterales</taxon>
        <taxon>Enterobacteriaceae</taxon>
        <taxon>Escherichia</taxon>
    </lineage>
</organism>
<gene>
    <name type="primary">ydcT</name>
    <name type="ordered locus">b1441</name>
    <name type="ordered locus">JW1436</name>
</gene>
<reference key="1">
    <citation type="journal article" date="1996" name="DNA Res.">
        <title>A 570-kb DNA sequence of the Escherichia coli K-12 genome corresponding to the 28.0-40.1 min region on the linkage map.</title>
        <authorList>
            <person name="Aiba H."/>
            <person name="Baba T."/>
            <person name="Fujita K."/>
            <person name="Hayashi K."/>
            <person name="Inada T."/>
            <person name="Isono K."/>
            <person name="Itoh T."/>
            <person name="Kasai H."/>
            <person name="Kashimoto K."/>
            <person name="Kimura S."/>
            <person name="Kitakawa M."/>
            <person name="Kitagawa M."/>
            <person name="Makino K."/>
            <person name="Miki T."/>
            <person name="Mizobuchi K."/>
            <person name="Mori H."/>
            <person name="Mori T."/>
            <person name="Motomura K."/>
            <person name="Nakade S."/>
            <person name="Nakamura Y."/>
            <person name="Nashimoto H."/>
            <person name="Nishio Y."/>
            <person name="Oshima T."/>
            <person name="Saito N."/>
            <person name="Sampei G."/>
            <person name="Seki Y."/>
            <person name="Sivasundaram S."/>
            <person name="Tagami H."/>
            <person name="Takeda J."/>
            <person name="Takemoto K."/>
            <person name="Takeuchi Y."/>
            <person name="Wada C."/>
            <person name="Yamamoto Y."/>
            <person name="Horiuchi T."/>
        </authorList>
    </citation>
    <scope>NUCLEOTIDE SEQUENCE [LARGE SCALE GENOMIC DNA]</scope>
    <source>
        <strain>K12 / W3110 / ATCC 27325 / DSM 5911</strain>
    </source>
</reference>
<reference key="2">
    <citation type="journal article" date="1997" name="Science">
        <title>The complete genome sequence of Escherichia coli K-12.</title>
        <authorList>
            <person name="Blattner F.R."/>
            <person name="Plunkett G. III"/>
            <person name="Bloch C.A."/>
            <person name="Perna N.T."/>
            <person name="Burland V."/>
            <person name="Riley M."/>
            <person name="Collado-Vides J."/>
            <person name="Glasner J.D."/>
            <person name="Rode C.K."/>
            <person name="Mayhew G.F."/>
            <person name="Gregor J."/>
            <person name="Davis N.W."/>
            <person name="Kirkpatrick H.A."/>
            <person name="Goeden M.A."/>
            <person name="Rose D.J."/>
            <person name="Mau B."/>
            <person name="Shao Y."/>
        </authorList>
    </citation>
    <scope>NUCLEOTIDE SEQUENCE [LARGE SCALE GENOMIC DNA]</scope>
    <source>
        <strain>K12 / MG1655 / ATCC 47076</strain>
    </source>
</reference>
<reference key="3">
    <citation type="journal article" date="2006" name="Mol. Syst. Biol.">
        <title>Highly accurate genome sequences of Escherichia coli K-12 strains MG1655 and W3110.</title>
        <authorList>
            <person name="Hayashi K."/>
            <person name="Morooka N."/>
            <person name="Yamamoto Y."/>
            <person name="Fujita K."/>
            <person name="Isono K."/>
            <person name="Choi S."/>
            <person name="Ohtsubo E."/>
            <person name="Baba T."/>
            <person name="Wanner B.L."/>
            <person name="Mori H."/>
            <person name="Horiuchi T."/>
        </authorList>
    </citation>
    <scope>NUCLEOTIDE SEQUENCE [LARGE SCALE GENOMIC DNA]</scope>
    <source>
        <strain>K12 / W3110 / ATCC 27325 / DSM 5911</strain>
    </source>
</reference>
<reference key="4">
    <citation type="journal article" date="2016" name="Biochem. Biophys. Res. Commun.">
        <title>Two different routes for double-stranded DNA transfer in natural and artificial transformation of Escherichia coli.</title>
        <authorList>
            <person name="Sun D."/>
        </authorList>
    </citation>
    <scope>DISRUPTION PHENOTYPE</scope>
</reference>
<evidence type="ECO:0000255" key="1">
    <source>
        <dbReference type="PROSITE-ProRule" id="PRU00434"/>
    </source>
</evidence>
<evidence type="ECO:0000269" key="2">
    <source>
    </source>
</evidence>
<evidence type="ECO:0000305" key="3"/>
<proteinExistence type="inferred from homology"/>
<feature type="chain" id="PRO_0000093162" description="Uncharacterized ABC transporter ATP-binding protein YdcT">
    <location>
        <begin position="1"/>
        <end position="337"/>
    </location>
</feature>
<feature type="domain" description="ABC transporter" evidence="1">
    <location>
        <begin position="5"/>
        <end position="235"/>
    </location>
</feature>
<feature type="binding site" evidence="1">
    <location>
        <begin position="37"/>
        <end position="44"/>
    </location>
    <ligand>
        <name>ATP</name>
        <dbReference type="ChEBI" id="CHEBI:30616"/>
    </ligand>
</feature>
<keyword id="KW-0067">ATP-binding</keyword>
<keyword id="KW-0547">Nucleotide-binding</keyword>
<keyword id="KW-1185">Reference proteome</keyword>
<keyword id="KW-0813">Transport</keyword>
<name>YDCT_ECOLI</name>
<protein>
    <recommendedName>
        <fullName evidence="3">Uncharacterized ABC transporter ATP-binding protein YdcT</fullName>
    </recommendedName>
</protein>
<comment type="function">
    <text evidence="3">Probably part of the ABC transporter complex YdcSTUV. Probably responsible for energy coupling to the transport system.</text>
</comment>
<comment type="disruption phenotype">
    <text evidence="2">Inactivation of the gene does not significantly affect natural transformation.</text>
</comment>
<comment type="similarity">
    <text evidence="3">Belongs to the ABC transporter superfamily.</text>
</comment>